<comment type="function">
    <text evidence="1">Catalyzes the transfer of the gamma-phosphate of ATP to D-galactose to form alpha-D-galactose-1-phosphate (Gal-1-P).</text>
</comment>
<comment type="catalytic activity">
    <reaction evidence="1">
        <text>alpha-D-galactose + ATP = alpha-D-galactose 1-phosphate + ADP + H(+)</text>
        <dbReference type="Rhea" id="RHEA:13553"/>
        <dbReference type="ChEBI" id="CHEBI:15378"/>
        <dbReference type="ChEBI" id="CHEBI:28061"/>
        <dbReference type="ChEBI" id="CHEBI:30616"/>
        <dbReference type="ChEBI" id="CHEBI:58336"/>
        <dbReference type="ChEBI" id="CHEBI:456216"/>
        <dbReference type="EC" id="2.7.1.6"/>
    </reaction>
</comment>
<comment type="pathway">
    <text evidence="1">Carbohydrate metabolism; galactose metabolism.</text>
</comment>
<comment type="subcellular location">
    <subcellularLocation>
        <location evidence="1">Cytoplasm</location>
    </subcellularLocation>
</comment>
<comment type="similarity">
    <text evidence="1">Belongs to the GHMP kinase family. GalK subfamily.</text>
</comment>
<organism>
    <name type="scientific">Lactobacillus helveticus</name>
    <name type="common">Lactobacillus suntoryeus</name>
    <dbReference type="NCBI Taxonomy" id="1587"/>
    <lineage>
        <taxon>Bacteria</taxon>
        <taxon>Bacillati</taxon>
        <taxon>Bacillota</taxon>
        <taxon>Bacilli</taxon>
        <taxon>Lactobacillales</taxon>
        <taxon>Lactobacillaceae</taxon>
        <taxon>Lactobacillus</taxon>
    </lineage>
</organism>
<name>GAL1_LACHE</name>
<keyword id="KW-0067">ATP-binding</keyword>
<keyword id="KW-0119">Carbohydrate metabolism</keyword>
<keyword id="KW-0963">Cytoplasm</keyword>
<keyword id="KW-0299">Galactose metabolism</keyword>
<keyword id="KW-0418">Kinase</keyword>
<keyword id="KW-0460">Magnesium</keyword>
<keyword id="KW-0479">Metal-binding</keyword>
<keyword id="KW-0547">Nucleotide-binding</keyword>
<keyword id="KW-0808">Transferase</keyword>
<evidence type="ECO:0000255" key="1">
    <source>
        <dbReference type="HAMAP-Rule" id="MF_00246"/>
    </source>
</evidence>
<gene>
    <name evidence="1" type="primary">galK</name>
</gene>
<protein>
    <recommendedName>
        <fullName evidence="1">Galactokinase</fullName>
        <ecNumber evidence="1">2.7.1.6</ecNumber>
    </recommendedName>
    <alternativeName>
        <fullName evidence="1">Galactose kinase</fullName>
    </alternativeName>
</protein>
<sequence>MNKEELLKKYEATSNEKAKDVFFSPGRINVIGEHTDYNGGHVFPAPISLGVYGVYGPRDDKKVRLYSGNVDGDIVEFDIDDTNVEKDEDRFWANYFKGMITYLREKYDGIDHGFNLYIEANLPSGSGLSSSAAIEMLMGIILKDEFNLDVDRVSLAKMGQRTENEFIGLNSGIMDQFACIMGKKNSAIFLDCNTLKYEYLPLALGDYEIIIMATNNPHTLADSAYNNRVAECGRALKKLQQKLDIKALGELDNDTFDEYSYLINDETEIKRARHAVSENQRTLRATQAMKDGDLEKLGRLINASHESLHYDYEVTGKELDTLAEASWKQPGVLGARMIGGGFGGSAIAIVKKSEAENFKKNVGKIYRDAVGYDASFYDAEIVDGTKRI</sequence>
<reference key="1">
    <citation type="journal article" date="1991" name="J. Bacteriol.">
        <title>Galactose utilization in Lactobacillus helveticus: isolation and characterization of the galactokinase (galK) and galactose-1-phosphate uridyl transferase (galT) genes.</title>
        <authorList>
            <person name="Mollet B."/>
            <person name="Pilloud N."/>
        </authorList>
    </citation>
    <scope>NUCLEOTIDE SEQUENCE [GENOMIC DNA]</scope>
    <source>
        <strain>ATCC 15009 / DSM 20075 / BCRC 12936 / JCM 1120 / NBRC 15019 / NCIMB 11971 / NRRL B-4526 / Lh12</strain>
    </source>
</reference>
<feature type="chain" id="PRO_0000184614" description="Galactokinase">
    <location>
        <begin position="1"/>
        <end position="388"/>
    </location>
</feature>
<feature type="active site" description="Proton acceptor" evidence="1">
    <location>
        <position position="175"/>
    </location>
</feature>
<feature type="binding site" evidence="1">
    <location>
        <begin position="33"/>
        <end position="36"/>
    </location>
    <ligand>
        <name>substrate</name>
    </ligand>
</feature>
<feature type="binding site" evidence="1">
    <location>
        <position position="67"/>
    </location>
    <ligand>
        <name>ATP</name>
        <dbReference type="ChEBI" id="CHEBI:30616"/>
    </ligand>
</feature>
<feature type="binding site" evidence="1">
    <location>
        <begin position="125"/>
        <end position="131"/>
    </location>
    <ligand>
        <name>ATP</name>
        <dbReference type="ChEBI" id="CHEBI:30616"/>
    </ligand>
</feature>
<feature type="binding site" evidence="1">
    <location>
        <position position="131"/>
    </location>
    <ligand>
        <name>Mg(2+)</name>
        <dbReference type="ChEBI" id="CHEBI:18420"/>
    </ligand>
</feature>
<feature type="binding site" evidence="1">
    <location>
        <position position="163"/>
    </location>
    <ligand>
        <name>Mg(2+)</name>
        <dbReference type="ChEBI" id="CHEBI:18420"/>
    </ligand>
</feature>
<feature type="binding site" evidence="1">
    <location>
        <position position="225"/>
    </location>
    <ligand>
        <name>substrate</name>
    </ligand>
</feature>
<feature type="site" description="Transition state stabilizer" evidence="1">
    <location>
        <position position="27"/>
    </location>
</feature>
<dbReference type="EC" id="2.7.1.6" evidence="1"/>
<dbReference type="EMBL" id="X57248">
    <property type="protein sequence ID" value="CAA40525.1"/>
    <property type="molecule type" value="Genomic_DNA"/>
</dbReference>
<dbReference type="PIR" id="A47032">
    <property type="entry name" value="A47032"/>
</dbReference>
<dbReference type="RefSeq" id="WP_003627707.1">
    <property type="nucleotide sequence ID" value="NZ_RIQP01000038.1"/>
</dbReference>
<dbReference type="SMR" id="Q00052"/>
<dbReference type="eggNOG" id="COG0153">
    <property type="taxonomic scope" value="Bacteria"/>
</dbReference>
<dbReference type="UniPathway" id="UPA00214"/>
<dbReference type="GO" id="GO:0005829">
    <property type="term" value="C:cytosol"/>
    <property type="evidence" value="ECO:0007669"/>
    <property type="project" value="TreeGrafter"/>
</dbReference>
<dbReference type="GO" id="GO:0005524">
    <property type="term" value="F:ATP binding"/>
    <property type="evidence" value="ECO:0007669"/>
    <property type="project" value="UniProtKB-UniRule"/>
</dbReference>
<dbReference type="GO" id="GO:0004335">
    <property type="term" value="F:galactokinase activity"/>
    <property type="evidence" value="ECO:0007669"/>
    <property type="project" value="UniProtKB-UniRule"/>
</dbReference>
<dbReference type="GO" id="GO:0000287">
    <property type="term" value="F:magnesium ion binding"/>
    <property type="evidence" value="ECO:0007669"/>
    <property type="project" value="UniProtKB-UniRule"/>
</dbReference>
<dbReference type="GO" id="GO:0006012">
    <property type="term" value="P:galactose metabolic process"/>
    <property type="evidence" value="ECO:0007669"/>
    <property type="project" value="UniProtKB-UniRule"/>
</dbReference>
<dbReference type="FunFam" id="3.30.230.10:FF:000017">
    <property type="entry name" value="Galactokinase"/>
    <property type="match status" value="1"/>
</dbReference>
<dbReference type="FunFam" id="3.30.70.890:FF:000001">
    <property type="entry name" value="Galactokinase"/>
    <property type="match status" value="1"/>
</dbReference>
<dbReference type="Gene3D" id="3.30.230.10">
    <property type="match status" value="1"/>
</dbReference>
<dbReference type="Gene3D" id="3.30.70.890">
    <property type="entry name" value="GHMP kinase, C-terminal domain"/>
    <property type="match status" value="1"/>
</dbReference>
<dbReference type="HAMAP" id="MF_00246">
    <property type="entry name" value="Galactokinase"/>
    <property type="match status" value="1"/>
</dbReference>
<dbReference type="InterPro" id="IPR000705">
    <property type="entry name" value="Galactokinase"/>
</dbReference>
<dbReference type="InterPro" id="IPR022963">
    <property type="entry name" value="Galactokinase_bac"/>
</dbReference>
<dbReference type="InterPro" id="IPR019741">
    <property type="entry name" value="Galactokinase_CS"/>
</dbReference>
<dbReference type="InterPro" id="IPR019539">
    <property type="entry name" value="GalKase_N"/>
</dbReference>
<dbReference type="InterPro" id="IPR013750">
    <property type="entry name" value="GHMP_kinase_C_dom"/>
</dbReference>
<dbReference type="InterPro" id="IPR036554">
    <property type="entry name" value="GHMP_kinase_C_sf"/>
</dbReference>
<dbReference type="InterPro" id="IPR006204">
    <property type="entry name" value="GHMP_kinase_N_dom"/>
</dbReference>
<dbReference type="InterPro" id="IPR006203">
    <property type="entry name" value="GHMP_knse_ATP-bd_CS"/>
</dbReference>
<dbReference type="InterPro" id="IPR006206">
    <property type="entry name" value="Mevalonate/galactokinase"/>
</dbReference>
<dbReference type="InterPro" id="IPR020568">
    <property type="entry name" value="Ribosomal_Su5_D2-typ_SF"/>
</dbReference>
<dbReference type="InterPro" id="IPR014721">
    <property type="entry name" value="Ribsml_uS5_D2-typ_fold_subgr"/>
</dbReference>
<dbReference type="NCBIfam" id="TIGR00131">
    <property type="entry name" value="gal_kin"/>
    <property type="match status" value="1"/>
</dbReference>
<dbReference type="NCBIfam" id="NF003705">
    <property type="entry name" value="PRK05322.1"/>
    <property type="match status" value="1"/>
</dbReference>
<dbReference type="PANTHER" id="PTHR10457:SF7">
    <property type="entry name" value="GALACTOKINASE-RELATED"/>
    <property type="match status" value="1"/>
</dbReference>
<dbReference type="PANTHER" id="PTHR10457">
    <property type="entry name" value="MEVALONATE KINASE/GALACTOKINASE"/>
    <property type="match status" value="1"/>
</dbReference>
<dbReference type="Pfam" id="PF10509">
    <property type="entry name" value="GalKase_gal_bdg"/>
    <property type="match status" value="1"/>
</dbReference>
<dbReference type="Pfam" id="PF08544">
    <property type="entry name" value="GHMP_kinases_C"/>
    <property type="match status" value="1"/>
</dbReference>
<dbReference type="Pfam" id="PF00288">
    <property type="entry name" value="GHMP_kinases_N"/>
    <property type="match status" value="1"/>
</dbReference>
<dbReference type="PIRSF" id="PIRSF000530">
    <property type="entry name" value="Galactokinase"/>
    <property type="match status" value="1"/>
</dbReference>
<dbReference type="PRINTS" id="PR00473">
    <property type="entry name" value="GALCTOKINASE"/>
</dbReference>
<dbReference type="PRINTS" id="PR00959">
    <property type="entry name" value="MEVGALKINASE"/>
</dbReference>
<dbReference type="SUPFAM" id="SSF55060">
    <property type="entry name" value="GHMP Kinase, C-terminal domain"/>
    <property type="match status" value="1"/>
</dbReference>
<dbReference type="SUPFAM" id="SSF54211">
    <property type="entry name" value="Ribosomal protein S5 domain 2-like"/>
    <property type="match status" value="1"/>
</dbReference>
<dbReference type="PROSITE" id="PS00106">
    <property type="entry name" value="GALACTOKINASE"/>
    <property type="match status" value="1"/>
</dbReference>
<dbReference type="PROSITE" id="PS00627">
    <property type="entry name" value="GHMP_KINASES_ATP"/>
    <property type="match status" value="1"/>
</dbReference>
<accession>Q00052</accession>
<proteinExistence type="inferred from homology"/>